<keyword id="KW-0328">Glycosyltransferase</keyword>
<keyword id="KW-0808">Transferase</keyword>
<evidence type="ECO:0000255" key="1">
    <source>
        <dbReference type="HAMAP-Rule" id="MF_01628"/>
    </source>
</evidence>
<organism>
    <name type="scientific">Salmonella schwarzengrund (strain CVM19633)</name>
    <dbReference type="NCBI Taxonomy" id="439843"/>
    <lineage>
        <taxon>Bacteria</taxon>
        <taxon>Pseudomonadati</taxon>
        <taxon>Pseudomonadota</taxon>
        <taxon>Gammaproteobacteria</taxon>
        <taxon>Enterobacterales</taxon>
        <taxon>Enterobacteriaceae</taxon>
        <taxon>Salmonella</taxon>
    </lineage>
</organism>
<accession>B4TU42</accession>
<reference key="1">
    <citation type="journal article" date="2011" name="J. Bacteriol.">
        <title>Comparative genomics of 28 Salmonella enterica isolates: evidence for CRISPR-mediated adaptive sublineage evolution.</title>
        <authorList>
            <person name="Fricke W.F."/>
            <person name="Mammel M.K."/>
            <person name="McDermott P.F."/>
            <person name="Tartera C."/>
            <person name="White D.G."/>
            <person name="Leclerc J.E."/>
            <person name="Ravel J."/>
            <person name="Cebula T.A."/>
        </authorList>
    </citation>
    <scope>NUCLEOTIDE SEQUENCE [LARGE SCALE GENOMIC DNA]</scope>
    <source>
        <strain>CVM19633</strain>
    </source>
</reference>
<proteinExistence type="inferred from homology"/>
<name>TYPH_SALSV</name>
<sequence length="440" mass="47018">MFLAQEIIRKKRDGHALSDEEIRFFINGIRDNTISEGQIAALAMTIFFHDMTMPERVSLTMAMRDSGSVLDWKSLNLNGPIVDKHSTGGVGDVTSLMLGPMVAACGGYVPMISGRGLGHTGGTLDKLEAIPGFDIFPDDNRFREIIQDVGVAIIGQTSSLAPADKRFYATRDITATVDSIPLITGSILAKKLAEGLDALVMDVKVGSGAFMPTYELSEALAEAIVGVANGAGVRTTALLTDMNQVLASSAGNAVEVREAVQFLTGEYRNPRLFDVTMALCVEMLISGQLAKDDAEARAKLQAVLDNGKAAEVFGRMVAAQKGPSDFVENYDKYLPTAMLSKAVYADTEGFISAMDTRALGMAVVSMGGGRRQASDTIDYSVGFTDMARLGDSIDGQRPLAVIHAKDETSWQEAAKAVKAAIILDDKAPASTPSVYRRITE</sequence>
<feature type="chain" id="PRO_1000186272" description="Thymidine phosphorylase">
    <location>
        <begin position="1"/>
        <end position="440"/>
    </location>
</feature>
<protein>
    <recommendedName>
        <fullName evidence="1">Thymidine phosphorylase</fullName>
        <ecNumber evidence="1">2.4.2.4</ecNumber>
    </recommendedName>
    <alternativeName>
        <fullName evidence="1">TdRPase</fullName>
    </alternativeName>
</protein>
<comment type="function">
    <text evidence="1">The enzymes which catalyze the reversible phosphorolysis of pyrimidine nucleosides are involved in the degradation of these compounds and in their utilization as carbon and energy sources, or in the rescue of pyrimidine bases for nucleotide synthesis.</text>
</comment>
<comment type="catalytic activity">
    <reaction evidence="1">
        <text>thymidine + phosphate = 2-deoxy-alpha-D-ribose 1-phosphate + thymine</text>
        <dbReference type="Rhea" id="RHEA:16037"/>
        <dbReference type="ChEBI" id="CHEBI:17748"/>
        <dbReference type="ChEBI" id="CHEBI:17821"/>
        <dbReference type="ChEBI" id="CHEBI:43474"/>
        <dbReference type="ChEBI" id="CHEBI:57259"/>
        <dbReference type="EC" id="2.4.2.4"/>
    </reaction>
</comment>
<comment type="pathway">
    <text evidence="1">Pyrimidine metabolism; dTMP biosynthesis via salvage pathway; dTMP from thymine: step 1/2.</text>
</comment>
<comment type="subunit">
    <text evidence="1">Homodimer.</text>
</comment>
<comment type="similarity">
    <text evidence="1">Belongs to the thymidine/pyrimidine-nucleoside phosphorylase family.</text>
</comment>
<gene>
    <name evidence="1" type="primary">deoA</name>
    <name type="ordered locus">SeSA_A4822</name>
</gene>
<dbReference type="EC" id="2.4.2.4" evidence="1"/>
<dbReference type="EMBL" id="CP001127">
    <property type="protein sequence ID" value="ACF89038.1"/>
    <property type="molecule type" value="Genomic_DNA"/>
</dbReference>
<dbReference type="RefSeq" id="WP_000477795.1">
    <property type="nucleotide sequence ID" value="NC_011094.1"/>
</dbReference>
<dbReference type="SMR" id="B4TU42"/>
<dbReference type="KEGG" id="sew:SeSA_A4822"/>
<dbReference type="HOGENOM" id="CLU_025040_0_1_6"/>
<dbReference type="UniPathway" id="UPA00578">
    <property type="reaction ID" value="UER00638"/>
</dbReference>
<dbReference type="Proteomes" id="UP000001865">
    <property type="component" value="Chromosome"/>
</dbReference>
<dbReference type="GO" id="GO:0005829">
    <property type="term" value="C:cytosol"/>
    <property type="evidence" value="ECO:0007669"/>
    <property type="project" value="TreeGrafter"/>
</dbReference>
<dbReference type="GO" id="GO:0004645">
    <property type="term" value="F:1,4-alpha-oligoglucan phosphorylase activity"/>
    <property type="evidence" value="ECO:0007669"/>
    <property type="project" value="InterPro"/>
</dbReference>
<dbReference type="GO" id="GO:0009032">
    <property type="term" value="F:thymidine phosphorylase activity"/>
    <property type="evidence" value="ECO:0007669"/>
    <property type="project" value="UniProtKB-UniRule"/>
</dbReference>
<dbReference type="GO" id="GO:0006206">
    <property type="term" value="P:pyrimidine nucleobase metabolic process"/>
    <property type="evidence" value="ECO:0007669"/>
    <property type="project" value="InterPro"/>
</dbReference>
<dbReference type="GO" id="GO:0046104">
    <property type="term" value="P:thymidine metabolic process"/>
    <property type="evidence" value="ECO:0007669"/>
    <property type="project" value="UniProtKB-UniRule"/>
</dbReference>
<dbReference type="FunFam" id="3.40.1030.10:FF:000001">
    <property type="entry name" value="Thymidine phosphorylase"/>
    <property type="match status" value="1"/>
</dbReference>
<dbReference type="FunFam" id="3.90.1170.30:FF:000001">
    <property type="entry name" value="Thymidine phosphorylase"/>
    <property type="match status" value="1"/>
</dbReference>
<dbReference type="Gene3D" id="3.40.1030.10">
    <property type="entry name" value="Nucleoside phosphorylase/phosphoribosyltransferase catalytic domain"/>
    <property type="match status" value="1"/>
</dbReference>
<dbReference type="Gene3D" id="3.90.1170.30">
    <property type="entry name" value="Pyrimidine nucleoside phosphorylase-like, C-terminal domain"/>
    <property type="match status" value="1"/>
</dbReference>
<dbReference type="Gene3D" id="1.20.970.10">
    <property type="entry name" value="Transferase, Pyrimidine Nucleoside Phosphorylase, Chain C"/>
    <property type="match status" value="1"/>
</dbReference>
<dbReference type="HAMAP" id="MF_01628">
    <property type="entry name" value="Thymid_phosp"/>
    <property type="match status" value="1"/>
</dbReference>
<dbReference type="InterPro" id="IPR000312">
    <property type="entry name" value="Glycosyl_Trfase_fam3"/>
</dbReference>
<dbReference type="InterPro" id="IPR017459">
    <property type="entry name" value="Glycosyl_Trfase_fam3_N_dom"/>
</dbReference>
<dbReference type="InterPro" id="IPR036320">
    <property type="entry name" value="Glycosyl_Trfase_fam3_N_dom_sf"/>
</dbReference>
<dbReference type="InterPro" id="IPR035902">
    <property type="entry name" value="Nuc_phospho_transferase"/>
</dbReference>
<dbReference type="InterPro" id="IPR036566">
    <property type="entry name" value="PYNP-like_C_sf"/>
</dbReference>
<dbReference type="InterPro" id="IPR013102">
    <property type="entry name" value="PYNP_C"/>
</dbReference>
<dbReference type="InterPro" id="IPR018090">
    <property type="entry name" value="Pyrmidine_PPas_bac/euk"/>
</dbReference>
<dbReference type="InterPro" id="IPR017872">
    <property type="entry name" value="Pyrmidine_PPase_CS"/>
</dbReference>
<dbReference type="InterPro" id="IPR000053">
    <property type="entry name" value="Thymidine/pyrmidine_PPase"/>
</dbReference>
<dbReference type="InterPro" id="IPR013465">
    <property type="entry name" value="Thymidine_Pase"/>
</dbReference>
<dbReference type="NCBIfam" id="NF004490">
    <property type="entry name" value="PRK05820.1"/>
    <property type="match status" value="1"/>
</dbReference>
<dbReference type="NCBIfam" id="TIGR02643">
    <property type="entry name" value="T_phosphoryl"/>
    <property type="match status" value="1"/>
</dbReference>
<dbReference type="NCBIfam" id="TIGR02644">
    <property type="entry name" value="Y_phosphoryl"/>
    <property type="match status" value="1"/>
</dbReference>
<dbReference type="PANTHER" id="PTHR10515">
    <property type="entry name" value="THYMIDINE PHOSPHORYLASE"/>
    <property type="match status" value="1"/>
</dbReference>
<dbReference type="PANTHER" id="PTHR10515:SF0">
    <property type="entry name" value="THYMIDINE PHOSPHORYLASE"/>
    <property type="match status" value="1"/>
</dbReference>
<dbReference type="Pfam" id="PF02885">
    <property type="entry name" value="Glycos_trans_3N"/>
    <property type="match status" value="1"/>
</dbReference>
<dbReference type="Pfam" id="PF00591">
    <property type="entry name" value="Glycos_transf_3"/>
    <property type="match status" value="1"/>
</dbReference>
<dbReference type="Pfam" id="PF07831">
    <property type="entry name" value="PYNP_C"/>
    <property type="match status" value="1"/>
</dbReference>
<dbReference type="PIRSF" id="PIRSF000478">
    <property type="entry name" value="TP_PyNP"/>
    <property type="match status" value="1"/>
</dbReference>
<dbReference type="SMART" id="SM00941">
    <property type="entry name" value="PYNP_C"/>
    <property type="match status" value="1"/>
</dbReference>
<dbReference type="SUPFAM" id="SSF52418">
    <property type="entry name" value="Nucleoside phosphorylase/phosphoribosyltransferase catalytic domain"/>
    <property type="match status" value="1"/>
</dbReference>
<dbReference type="SUPFAM" id="SSF47648">
    <property type="entry name" value="Nucleoside phosphorylase/phosphoribosyltransferase N-terminal domain"/>
    <property type="match status" value="1"/>
</dbReference>
<dbReference type="SUPFAM" id="SSF54680">
    <property type="entry name" value="Pyrimidine nucleoside phosphorylase C-terminal domain"/>
    <property type="match status" value="1"/>
</dbReference>
<dbReference type="PROSITE" id="PS00647">
    <property type="entry name" value="THYMID_PHOSPHORYLASE"/>
    <property type="match status" value="1"/>
</dbReference>